<protein>
    <recommendedName>
        <fullName evidence="1">Agmatine deiminase</fullName>
        <ecNumber evidence="1">3.5.3.12</ecNumber>
    </recommendedName>
    <alternativeName>
        <fullName evidence="1">Agmatine iminohydrolase</fullName>
    </alternativeName>
</protein>
<organism>
    <name type="scientific">Pseudomonas fluorescens (strain ATCC BAA-477 / NRRL B-23932 / Pf-5)</name>
    <dbReference type="NCBI Taxonomy" id="220664"/>
    <lineage>
        <taxon>Bacteria</taxon>
        <taxon>Pseudomonadati</taxon>
        <taxon>Pseudomonadota</taxon>
        <taxon>Gammaproteobacteria</taxon>
        <taxon>Pseudomonadales</taxon>
        <taxon>Pseudomonadaceae</taxon>
        <taxon>Pseudomonas</taxon>
    </lineage>
</organism>
<comment type="function">
    <text evidence="1">Mediates the hydrolysis of agmatine into N-carbamoylputrescine in the arginine decarboxylase (ADC) pathway of putrescine biosynthesis, a basic polyamine.</text>
</comment>
<comment type="catalytic activity">
    <reaction evidence="1">
        <text>agmatine + H2O = N-carbamoylputrescine + NH4(+)</text>
        <dbReference type="Rhea" id="RHEA:18037"/>
        <dbReference type="ChEBI" id="CHEBI:15377"/>
        <dbReference type="ChEBI" id="CHEBI:28938"/>
        <dbReference type="ChEBI" id="CHEBI:58145"/>
        <dbReference type="ChEBI" id="CHEBI:58318"/>
        <dbReference type="EC" id="3.5.3.12"/>
    </reaction>
</comment>
<comment type="pathway">
    <text evidence="1">Amine and polyamine biosynthesis; putrescine biosynthesis via agmatine pathway; N-carbamoylputrescine from agmatine: step 1/1.</text>
</comment>
<comment type="subunit">
    <text evidence="1">Homodimer.</text>
</comment>
<comment type="similarity">
    <text evidence="1">Belongs to the agmatine deiminase family.</text>
</comment>
<name>AGUA_PSEF5</name>
<sequence length="368" mass="40861">MSTLHSTPRADGFYMPAEWATQTQAWMIWPERPDNWRLGGKPAQAAHAAVAKAIARFEPVTVAVSAAQYENARARLDVPNIRVVEMSSDDAWVRDTGPTFVINASGEVRGVHWGFNAWGGFEGGLYSPWNRDEQVASKVLEIERCQEYRTEGFVLEGGSIHVDGEGTLITTEECLLNHNRNPHLSREEIEAVLREHLAVEQIVWLPDGLYNDETDGHVDNFCCYVRPGEVLLAWTDDPQDPNYPRCQAALQVLENTRDAKGRTFKVHKMPIPGPLYATEEECAGVDAVEGSQERNPSVRLAGSYVNFLIVNGGIIAPSFDDPMDAQAKAILQQLFPEHEVVMVPGRELLLGGGNIHCLTQQQPAPQRI</sequence>
<reference key="1">
    <citation type="journal article" date="2005" name="Nat. Biotechnol.">
        <title>Complete genome sequence of the plant commensal Pseudomonas fluorescens Pf-5.</title>
        <authorList>
            <person name="Paulsen I.T."/>
            <person name="Press C.M."/>
            <person name="Ravel J."/>
            <person name="Kobayashi D.Y."/>
            <person name="Myers G.S.A."/>
            <person name="Mavrodi D.V."/>
            <person name="DeBoy R.T."/>
            <person name="Seshadri R."/>
            <person name="Ren Q."/>
            <person name="Madupu R."/>
            <person name="Dodson R.J."/>
            <person name="Durkin A.S."/>
            <person name="Brinkac L.M."/>
            <person name="Daugherty S.C."/>
            <person name="Sullivan S.A."/>
            <person name="Rosovitz M.J."/>
            <person name="Gwinn M.L."/>
            <person name="Zhou L."/>
            <person name="Schneider D.J."/>
            <person name="Cartinhour S.W."/>
            <person name="Nelson W.C."/>
            <person name="Weidman J."/>
            <person name="Watkins K."/>
            <person name="Tran K."/>
            <person name="Khouri H."/>
            <person name="Pierson E.A."/>
            <person name="Pierson L.S. III"/>
            <person name="Thomashow L.S."/>
            <person name="Loper J.E."/>
        </authorList>
    </citation>
    <scope>NUCLEOTIDE SEQUENCE [LARGE SCALE GENOMIC DNA]</scope>
    <source>
        <strain>ATCC BAA-477 / NRRL B-23932 / Pf-5</strain>
    </source>
</reference>
<keyword id="KW-0378">Hydrolase</keyword>
<keyword id="KW-0620">Polyamine biosynthesis</keyword>
<dbReference type="EC" id="3.5.3.12" evidence="1"/>
<dbReference type="EMBL" id="CP000076">
    <property type="protein sequence ID" value="AAY95719.1"/>
    <property type="molecule type" value="Genomic_DNA"/>
</dbReference>
<dbReference type="RefSeq" id="WP_011058686.1">
    <property type="nucleotide sequence ID" value="NC_004129.6"/>
</dbReference>
<dbReference type="SMR" id="Q4KJX9"/>
<dbReference type="STRING" id="220664.PFL_0308"/>
<dbReference type="KEGG" id="pfl:PFL_0308"/>
<dbReference type="PATRIC" id="fig|220664.5.peg.316"/>
<dbReference type="eggNOG" id="COG2957">
    <property type="taxonomic scope" value="Bacteria"/>
</dbReference>
<dbReference type="HOGENOM" id="CLU_037682_1_0_6"/>
<dbReference type="UniPathway" id="UPA00534">
    <property type="reaction ID" value="UER00285"/>
</dbReference>
<dbReference type="Proteomes" id="UP000008540">
    <property type="component" value="Chromosome"/>
</dbReference>
<dbReference type="GO" id="GO:0047632">
    <property type="term" value="F:agmatine deiminase activity"/>
    <property type="evidence" value="ECO:0007669"/>
    <property type="project" value="UniProtKB-UniRule"/>
</dbReference>
<dbReference type="GO" id="GO:0004668">
    <property type="term" value="F:protein-arginine deiminase activity"/>
    <property type="evidence" value="ECO:0007669"/>
    <property type="project" value="InterPro"/>
</dbReference>
<dbReference type="GO" id="GO:0033388">
    <property type="term" value="P:putrescine biosynthetic process from arginine"/>
    <property type="evidence" value="ECO:0007669"/>
    <property type="project" value="UniProtKB-UniRule"/>
</dbReference>
<dbReference type="Gene3D" id="3.75.10.10">
    <property type="entry name" value="L-arginine/glycine Amidinotransferase, Chain A"/>
    <property type="match status" value="1"/>
</dbReference>
<dbReference type="HAMAP" id="MF_01841">
    <property type="entry name" value="Agmatine_deimin"/>
    <property type="match status" value="1"/>
</dbReference>
<dbReference type="InterPro" id="IPR017754">
    <property type="entry name" value="Agmatine_deiminase"/>
</dbReference>
<dbReference type="InterPro" id="IPR007466">
    <property type="entry name" value="Peptidyl-Arg-deiminase_porph"/>
</dbReference>
<dbReference type="NCBIfam" id="TIGR03380">
    <property type="entry name" value="agmatine_aguA"/>
    <property type="match status" value="1"/>
</dbReference>
<dbReference type="NCBIfam" id="NF010070">
    <property type="entry name" value="PRK13551.1"/>
    <property type="match status" value="1"/>
</dbReference>
<dbReference type="PANTHER" id="PTHR31377">
    <property type="entry name" value="AGMATINE DEIMINASE-RELATED"/>
    <property type="match status" value="1"/>
</dbReference>
<dbReference type="PANTHER" id="PTHR31377:SF0">
    <property type="entry name" value="AGMATINE DEIMINASE-RELATED"/>
    <property type="match status" value="1"/>
</dbReference>
<dbReference type="Pfam" id="PF04371">
    <property type="entry name" value="PAD_porph"/>
    <property type="match status" value="1"/>
</dbReference>
<dbReference type="SUPFAM" id="SSF55909">
    <property type="entry name" value="Pentein"/>
    <property type="match status" value="1"/>
</dbReference>
<gene>
    <name evidence="1" type="primary">aguA</name>
    <name type="ordered locus">PFL_0308</name>
</gene>
<evidence type="ECO:0000255" key="1">
    <source>
        <dbReference type="HAMAP-Rule" id="MF_01841"/>
    </source>
</evidence>
<accession>Q4KJX9</accession>
<proteinExistence type="inferred from homology"/>
<feature type="chain" id="PRO_1000070562" description="Agmatine deiminase">
    <location>
        <begin position="1"/>
        <end position="368"/>
    </location>
</feature>
<feature type="active site" description="Amidino-cysteine intermediate" evidence="1">
    <location>
        <position position="357"/>
    </location>
</feature>